<evidence type="ECO:0000250" key="1"/>
<evidence type="ECO:0000250" key="2">
    <source>
        <dbReference type="UniProtKB" id="Q08AG7"/>
    </source>
</evidence>
<evidence type="ECO:0000305" key="3"/>
<organism>
    <name type="scientific">Picea sitchensis</name>
    <name type="common">Sitka spruce</name>
    <name type="synonym">Pinus sitchensis</name>
    <dbReference type="NCBI Taxonomy" id="3332"/>
    <lineage>
        <taxon>Eukaryota</taxon>
        <taxon>Viridiplantae</taxon>
        <taxon>Streptophyta</taxon>
        <taxon>Embryophyta</taxon>
        <taxon>Tracheophyta</taxon>
        <taxon>Spermatophyta</taxon>
        <taxon>Pinopsida</taxon>
        <taxon>Pinidae</taxon>
        <taxon>Conifers I</taxon>
        <taxon>Pinales</taxon>
        <taxon>Pinaceae</taxon>
        <taxon>Picea</taxon>
    </lineage>
</organism>
<keyword id="KW-0963">Cytoplasm</keyword>
<keyword id="KW-0206">Cytoskeleton</keyword>
<sequence length="69" mass="7594">MDRTAAQNARESLDLAFSISNFLQTGLDRHTLSILIALCEHGVNPEALAAVVKELRREAAALHQHQDQS</sequence>
<comment type="function">
    <text evidence="1">Required for gamma-tubulin complex recruitment to the microtubule organizing centers (MTOCs).</text>
</comment>
<comment type="subunit">
    <text evidence="1">Part of the gamma-tubulin complex.</text>
</comment>
<comment type="subcellular location">
    <subcellularLocation>
        <location evidence="2">Cytoplasm</location>
        <location evidence="2">Cytoskeleton</location>
        <location evidence="2">Microtubule organizing center</location>
    </subcellularLocation>
    <subcellularLocation>
        <location evidence="2">Cytoplasm</location>
        <location evidence="2">Cytoskeleton</location>
        <location evidence="2">Spindle</location>
    </subcellularLocation>
</comment>
<comment type="similarity">
    <text evidence="3">Belongs to the MOZART1 family.</text>
</comment>
<protein>
    <recommendedName>
        <fullName>Mitotic-spindle organizing protein 1</fullName>
    </recommendedName>
    <alternativeName>
        <fullName>Mitotic-spindle organizing protein associated with a ring of gamma-tubulin 1</fullName>
    </alternativeName>
</protein>
<feature type="chain" id="PRO_0000365078" description="Mitotic-spindle organizing protein 1">
    <location>
        <begin position="1"/>
        <end position="69"/>
    </location>
</feature>
<reference key="1">
    <citation type="submission" date="2006-10" db="EMBL/GenBank/DDBJ databases">
        <title>The spruce transcriptome: analysis of ca. 6,500 sequence-verified full-length cDNAs.</title>
        <authorList>
            <person name="Ralph S.G."/>
            <person name="Kirkpatrick R."/>
            <person name="Chun H.J.E."/>
            <person name="Palmquist D."/>
            <person name="Wynhoven B."/>
            <person name="Kolosova N."/>
            <person name="Cooper N."/>
            <person name="Oddy C."/>
            <person name="Jancsik S."/>
            <person name="Ritland C.E."/>
            <person name="Douglas C.J."/>
            <person name="Butterfield Y.S.N."/>
            <person name="Liu J."/>
            <person name="Stott J."/>
            <person name="Yang G."/>
            <person name="Barber S."/>
            <person name="Holt R.A."/>
            <person name="Siddiqui A."/>
            <person name="Jones S.J.M."/>
            <person name="Marra M.A."/>
            <person name="Ritland K."/>
            <person name="Bohlmann J."/>
        </authorList>
    </citation>
    <scope>NUCLEOTIDE SEQUENCE [LARGE SCALE MRNA]</scope>
    <source>
        <tissue>Bark</tissue>
    </source>
</reference>
<reference key="2">
    <citation type="submission" date="2007-06" db="EMBL/GenBank/DDBJ databases">
        <title>Full length cDNA sequences from Sitka Spruce (Picea sitchensis).</title>
        <authorList>
            <person name="Ralph S.G."/>
            <person name="Chun H.E."/>
            <person name="Liao N."/>
            <person name="Ali J."/>
            <person name="Reid K."/>
            <person name="Kolosova N."/>
            <person name="Cooper N."/>
            <person name="Cullis C."/>
            <person name="Jancsik S."/>
            <person name="Moore R."/>
            <person name="Mayo M."/>
            <person name="Wagner S."/>
            <person name="Holt R.A."/>
            <person name="Jones S.J.M."/>
            <person name="Marra M.A."/>
            <person name="Ritland C.E."/>
            <person name="Ritland K."/>
            <person name="Bohlmann J."/>
        </authorList>
    </citation>
    <scope>NUCLEOTIDE SEQUENCE [LARGE SCALE MRNA]</scope>
</reference>
<accession>A9NKD9</accession>
<proteinExistence type="inferred from homology"/>
<name>MZT1_PICSI</name>
<dbReference type="EMBL" id="EF081718">
    <property type="protein sequence ID" value="ABK21100.1"/>
    <property type="molecule type" value="mRNA"/>
</dbReference>
<dbReference type="EMBL" id="EF677045">
    <property type="protein sequence ID" value="ABR16900.1"/>
    <property type="molecule type" value="mRNA"/>
</dbReference>
<dbReference type="SMR" id="A9NKD9"/>
<dbReference type="GO" id="GO:0005737">
    <property type="term" value="C:cytoplasm"/>
    <property type="evidence" value="ECO:0007669"/>
    <property type="project" value="UniProtKB-KW"/>
</dbReference>
<dbReference type="GO" id="GO:0000931">
    <property type="term" value="C:gamma-tubulin ring complex"/>
    <property type="evidence" value="ECO:0007669"/>
    <property type="project" value="InterPro"/>
</dbReference>
<dbReference type="GO" id="GO:0031021">
    <property type="term" value="C:interphase microtubule organizing center"/>
    <property type="evidence" value="ECO:0007669"/>
    <property type="project" value="TreeGrafter"/>
</dbReference>
<dbReference type="GO" id="GO:0005819">
    <property type="term" value="C:spindle"/>
    <property type="evidence" value="ECO:0007669"/>
    <property type="project" value="UniProtKB-SubCell"/>
</dbReference>
<dbReference type="GO" id="GO:0033566">
    <property type="term" value="P:gamma-tubulin complex localization"/>
    <property type="evidence" value="ECO:0007669"/>
    <property type="project" value="InterPro"/>
</dbReference>
<dbReference type="GO" id="GO:0051415">
    <property type="term" value="P:microtubule nucleation by interphase microtubule organizing center"/>
    <property type="evidence" value="ECO:0007669"/>
    <property type="project" value="TreeGrafter"/>
</dbReference>
<dbReference type="GO" id="GO:0090307">
    <property type="term" value="P:mitotic spindle assembly"/>
    <property type="evidence" value="ECO:0007669"/>
    <property type="project" value="TreeGrafter"/>
</dbReference>
<dbReference type="InterPro" id="IPR022214">
    <property type="entry name" value="MZT1"/>
</dbReference>
<dbReference type="PANTHER" id="PTHR28520">
    <property type="entry name" value="MITOTIC-SPINDLE ORGANIZING PROTEIN 1"/>
    <property type="match status" value="1"/>
</dbReference>
<dbReference type="PANTHER" id="PTHR28520:SF2">
    <property type="entry name" value="MITOTIC-SPINDLE ORGANIZING PROTEIN 1"/>
    <property type="match status" value="1"/>
</dbReference>
<dbReference type="Pfam" id="PF12554">
    <property type="entry name" value="MOZART1"/>
    <property type="match status" value="1"/>
</dbReference>